<dbReference type="Proteomes" id="UP000694559">
    <property type="component" value="Unplaced"/>
</dbReference>
<dbReference type="GO" id="GO:0005576">
    <property type="term" value="C:extracellular region"/>
    <property type="evidence" value="ECO:0007669"/>
    <property type="project" value="UniProtKB-SubCell"/>
</dbReference>
<dbReference type="GO" id="GO:0016020">
    <property type="term" value="C:membrane"/>
    <property type="evidence" value="ECO:0007669"/>
    <property type="project" value="UniProtKB-KW"/>
</dbReference>
<dbReference type="GO" id="GO:0044218">
    <property type="term" value="C:other organism cell membrane"/>
    <property type="evidence" value="ECO:0007669"/>
    <property type="project" value="UniProtKB-KW"/>
</dbReference>
<dbReference type="GO" id="GO:0090729">
    <property type="term" value="F:toxin activity"/>
    <property type="evidence" value="ECO:0007669"/>
    <property type="project" value="UniProtKB-KW"/>
</dbReference>
<dbReference type="GO" id="GO:0031640">
    <property type="term" value="P:killing of cells of another organism"/>
    <property type="evidence" value="ECO:0007669"/>
    <property type="project" value="UniProtKB-KW"/>
</dbReference>
<reference key="1">
    <citation type="journal article" date="2011" name="Toxicon">
        <title>Cytotoxic and antioxidant property of a purified fraction (NN-32) of Indian Naja naja venom on Ehrlich ascites carcinoma in BALB/c mice.</title>
        <authorList>
            <person name="Das T."/>
            <person name="Bhattacharya S."/>
            <person name="Halder B."/>
            <person name="Biswas A."/>
            <person name="Das gupta S."/>
            <person name="Gomes A."/>
            <person name="Gomes A."/>
        </authorList>
    </citation>
    <scope>PROTEIN SEQUENCE</scope>
    <scope>FUNCTION</scope>
    <scope>SUBCELLULAR LOCATION</scope>
    <scope>TOXIC DOSE</scope>
    <scope>MASS SPECTROMETRY</scope>
    <source>
        <tissue>Venom</tissue>
    </source>
</reference>
<evidence type="ECO:0000250" key="1">
    <source>
        <dbReference type="UniProtKB" id="P60301"/>
    </source>
</evidence>
<evidence type="ECO:0000269" key="2">
    <source>
    </source>
</evidence>
<evidence type="ECO:0000303" key="3">
    <source>
    </source>
</evidence>
<evidence type="ECO:0000305" key="4"/>
<organism>
    <name type="scientific">Naja naja</name>
    <name type="common">Indian cobra</name>
    <dbReference type="NCBI Taxonomy" id="35670"/>
    <lineage>
        <taxon>Eukaryota</taxon>
        <taxon>Metazoa</taxon>
        <taxon>Chordata</taxon>
        <taxon>Craniata</taxon>
        <taxon>Vertebrata</taxon>
        <taxon>Euteleostomi</taxon>
        <taxon>Lepidosauria</taxon>
        <taxon>Squamata</taxon>
        <taxon>Bifurcata</taxon>
        <taxon>Unidentata</taxon>
        <taxon>Episquamata</taxon>
        <taxon>Toxicofera</taxon>
        <taxon>Serpentes</taxon>
        <taxon>Colubroidea</taxon>
        <taxon>Elapidae</taxon>
        <taxon>Elapinae</taxon>
        <taxon>Naja</taxon>
    </lineage>
</organism>
<protein>
    <recommendedName>
        <fullName>Cytotoxin NN-32</fullName>
    </recommendedName>
</protein>
<comment type="function">
    <text evidence="2">Shows cytotoxic activity against Ehrlich ascites carcinoma (EAC) model in mice. Also shows effect on apoptotic features such as nuclear fragmentation, caspase activity, pro- and anti-apoptotic protein levels on treated EAC cells. Increased levels of antioxidant enzymes and cytokine levels observed in toxin-treated EAC mice. Cardiotoxic towards guinea pig auricle. Has no cytotoxicity towards macrophages in vivo in EAC bearing mice or in vitro in normal human lymphocytes.</text>
</comment>
<comment type="subunit">
    <text evidence="1">Monomer in solution; Homodimer and oligomer in the presence of negatively charged lipids forming a pore with a size ranging between 20 and 30 Angstroms.</text>
</comment>
<comment type="subcellular location">
    <subcellularLocation>
        <location evidence="2">Secreted</location>
    </subcellularLocation>
    <subcellularLocation>
        <location evidence="1">Target cell membrane</location>
    </subcellularLocation>
</comment>
<comment type="tissue specificity">
    <text evidence="4">Expressed by the venom gland.</text>
</comment>
<comment type="mass spectrometry"/>
<comment type="toxic dose">
    <text evidence="2">LD(50) is 4 mg/kg by intraperitoneal injection in mice.</text>
</comment>
<comment type="similarity">
    <text evidence="4">Belongs to the three-finger toxin family. Short-chain subfamily. Type IA cytotoxin sub-subfamily.</text>
</comment>
<proteinExistence type="evidence at protein level"/>
<name>3SAW_NAJNA</name>
<accession>B3EWR3</accession>
<sequence>LKCNKLVPLF</sequence>
<feature type="peptide" id="PRO_0000420493" description="Cytotoxin NN-32" evidence="2">
    <location>
        <begin position="1"/>
        <end position="10" status="greater than"/>
    </location>
</feature>
<feature type="non-terminal residue" evidence="3">
    <location>
        <position position="10"/>
    </location>
</feature>
<keyword id="KW-0123">Cardiotoxin</keyword>
<keyword id="KW-0204">Cytolysis</keyword>
<keyword id="KW-0903">Direct protein sequencing</keyword>
<keyword id="KW-0472">Membrane</keyword>
<keyword id="KW-1185">Reference proteome</keyword>
<keyword id="KW-0964">Secreted</keyword>
<keyword id="KW-1052">Target cell membrane</keyword>
<keyword id="KW-1053">Target membrane</keyword>
<keyword id="KW-0800">Toxin</keyword>